<keyword id="KW-0012">Acyltransferase</keyword>
<keyword id="KW-0808">Transferase</keyword>
<protein>
    <recommendedName>
        <fullName evidence="3">Epi-neemfruitin B 7-O-acetyltransferse L7AT</fullName>
        <ecNumber evidence="2">2.1.1.-</ecNumber>
    </recommendedName>
    <alternativeName>
        <fullName evidence="3">Limonoid 7-O-acetyltransferse-like</fullName>
        <shortName evidence="3">MaL7AT</shortName>
    </alternativeName>
</protein>
<name>L7AT_MELAZ</name>
<feature type="chain" id="PRO_0000461347" description="Epi-neemfruitin B 7-O-acetyltransferse L7AT">
    <location>
        <begin position="1"/>
        <end position="451"/>
    </location>
</feature>
<feature type="active site" description="Proton acceptor" evidence="1">
    <location>
        <position position="165"/>
    </location>
</feature>
<feature type="active site" description="Proton acceptor" evidence="1">
    <location>
        <position position="384"/>
    </location>
</feature>
<accession>P0DXH6</accession>
<dbReference type="EC" id="2.1.1.-" evidence="2"/>
<dbReference type="EMBL" id="OP947601">
    <property type="protein sequence ID" value="WBW48726.1"/>
    <property type="molecule type" value="mRNA"/>
</dbReference>
<dbReference type="SMR" id="P0DXH6"/>
<dbReference type="UniPathway" id="UPA00213"/>
<dbReference type="GO" id="GO:0016746">
    <property type="term" value="F:acyltransferase activity"/>
    <property type="evidence" value="ECO:0007669"/>
    <property type="project" value="UniProtKB-KW"/>
</dbReference>
<dbReference type="GO" id="GO:0016491">
    <property type="term" value="F:oxidoreductase activity"/>
    <property type="evidence" value="ECO:0007669"/>
    <property type="project" value="UniProtKB-KW"/>
</dbReference>
<dbReference type="Gene3D" id="3.30.559.10">
    <property type="entry name" value="Chloramphenicol acetyltransferase-like domain"/>
    <property type="match status" value="2"/>
</dbReference>
<dbReference type="InterPro" id="IPR023213">
    <property type="entry name" value="CAT-like_dom_sf"/>
</dbReference>
<dbReference type="PANTHER" id="PTHR31623">
    <property type="entry name" value="F21J9.9"/>
    <property type="match status" value="1"/>
</dbReference>
<dbReference type="PANTHER" id="PTHR31623:SF33">
    <property type="entry name" value="STEMMADENINE O-ACETYLTRANSFERASE-LIKE"/>
    <property type="match status" value="1"/>
</dbReference>
<dbReference type="Pfam" id="PF02458">
    <property type="entry name" value="Transferase"/>
    <property type="match status" value="1"/>
</dbReference>
<gene>
    <name evidence="3" type="primary">L7AT</name>
</gene>
<sequence>MEPEIISRESIKPSSATPLHLKTHKLCLLDQYRHHAYFPIVLYYPFNQEPNISDPTQINHIVSERLQLLKQSLPETLSRFYPFAGKIKDNLSVDCNDEGIYFVEARVKSSLSDYFNQPNFANANYKFIPFDVKELSGSISGLHVAKIQVTTFAYGGLVICACLSHLFGDGITLNSFLKSWVATACKNAEEAERPNNDASSLFPQQEIYPKEATWTEMCKPFYRDGRFVSRRFLFDAKAIANLKDKVASSLVQNPSRVEAVSALLSRCIMTAFKGKFGSHRPILLTHTVNMRRKAKPLMPEYSMGNIVWTANALCTNEEPELDGLVGKLREAIMEINGDFLKSLQGDEGFLNLCEAAKNESALCSSAVERITFSSWCNFGLVDIDFGWGKPIWVSTIGIDGPVPCFSNTIILMDTRLKGEIEAWVYLLEEDMNILELDKELIAFAKMDPSPM</sequence>
<comment type="function">
    <text evidence="2">Acetyltransferase involved in the biosynthesis of limonoids triterpene natural products such as azadirachtin, an antifeedant widely used as bioinsecticide, and possessing many medicinal applications including anti-tumoral, anti-malarial, anti-rheumatic, antibacterial, anti-inflammatory, anti-pyretic and diuretic effects (PubMed:36701471). Catalyzes the formation of 7-acetyl-epi-neemfruitin B from epi-neemfruitin B (PubMed:36701471).</text>
</comment>
<comment type="catalytic activity">
    <reaction evidence="2">
        <text>epi-neemfruitin B + acetyl-CoA = 7-acetyl-epi-neemfruitin B + CoA</text>
        <dbReference type="Rhea" id="RHEA:80335"/>
        <dbReference type="ChEBI" id="CHEBI:57287"/>
        <dbReference type="ChEBI" id="CHEBI:57288"/>
        <dbReference type="ChEBI" id="CHEBI:231467"/>
        <dbReference type="ChEBI" id="CHEBI:231469"/>
    </reaction>
    <physiologicalReaction direction="left-to-right" evidence="2">
        <dbReference type="Rhea" id="RHEA:80336"/>
    </physiologicalReaction>
</comment>
<comment type="pathway">
    <text evidence="2">Secondary metabolite biosynthesis; terpenoid biosynthesis.</text>
</comment>
<comment type="subunit">
    <text evidence="1">Monomer.</text>
</comment>
<comment type="tissue specificity">
    <text evidence="2">Mainly expressed in petioles and, to a lower extent, in roots.</text>
</comment>
<comment type="similarity">
    <text evidence="4">Belongs to the plant acyltransferase family.</text>
</comment>
<organism>
    <name type="scientific">Melia azedarach</name>
    <name type="common">Chinaberry tree</name>
    <dbReference type="NCBI Taxonomy" id="155640"/>
    <lineage>
        <taxon>Eukaryota</taxon>
        <taxon>Viridiplantae</taxon>
        <taxon>Streptophyta</taxon>
        <taxon>Embryophyta</taxon>
        <taxon>Tracheophyta</taxon>
        <taxon>Spermatophyta</taxon>
        <taxon>Magnoliopsida</taxon>
        <taxon>eudicotyledons</taxon>
        <taxon>Gunneridae</taxon>
        <taxon>Pentapetalae</taxon>
        <taxon>rosids</taxon>
        <taxon>malvids</taxon>
        <taxon>Sapindales</taxon>
        <taxon>Meliaceae</taxon>
        <taxon>Melia</taxon>
    </lineage>
</organism>
<proteinExistence type="evidence at protein level"/>
<reference key="1">
    <citation type="journal article" date="2023" name="Science">
        <title>Complex scaffold remodeling in plant triterpene biosynthesis.</title>
        <authorList>
            <person name="De La Pena R."/>
            <person name="Hodgson H."/>
            <person name="Liu J.C."/>
            <person name="Stephenson M.J."/>
            <person name="Martin A.C."/>
            <person name="Owen C."/>
            <person name="Harkess A."/>
            <person name="Leebens-Mack J."/>
            <person name="Jimenez L.E."/>
            <person name="Osbourn A."/>
            <person name="Sattely E.S."/>
        </authorList>
    </citation>
    <scope>NUCLEOTIDE SEQUENCE [MRNA]</scope>
    <scope>FUNCTION</scope>
    <scope>CATALYTIC ACTIVITY</scope>
    <scope>PATHWAY</scope>
    <scope>TISSUE SPECIFICITY</scope>
    <source>
        <strain>cv. Valencia</strain>
    </source>
</reference>
<evidence type="ECO:0000250" key="1">
    <source>
        <dbReference type="UniProtKB" id="Q70PR7"/>
    </source>
</evidence>
<evidence type="ECO:0000269" key="2">
    <source>
    </source>
</evidence>
<evidence type="ECO:0000303" key="3">
    <source>
    </source>
</evidence>
<evidence type="ECO:0000305" key="4"/>